<sequence>MSMQDPIADMLTRIRNGQAANKVSVKMPSAKLKVAIAKLLKEEGYIADYAVADEAKPELEITLKYFQGQPVVETIQRVSRPGLRIYKGKNELPKVMGGLGVAIVSTSKGLMTDRAARLAGMGGEVICYVA</sequence>
<comment type="function">
    <text evidence="1">One of the primary rRNA binding proteins, it binds directly to 16S rRNA central domain where it helps coordinate assembly of the platform of the 30S subunit.</text>
</comment>
<comment type="subunit">
    <text evidence="1">Part of the 30S ribosomal subunit. Contacts proteins S5 and S12.</text>
</comment>
<comment type="similarity">
    <text evidence="1">Belongs to the universal ribosomal protein uS8 family.</text>
</comment>
<protein>
    <recommendedName>
        <fullName evidence="1">Small ribosomal subunit protein uS8</fullName>
    </recommendedName>
    <alternativeName>
        <fullName evidence="2">30S ribosomal protein S8</fullName>
    </alternativeName>
</protein>
<name>RS8_SHESR</name>
<organism>
    <name type="scientific">Shewanella sp. (strain MR-7)</name>
    <dbReference type="NCBI Taxonomy" id="60481"/>
    <lineage>
        <taxon>Bacteria</taxon>
        <taxon>Pseudomonadati</taxon>
        <taxon>Pseudomonadota</taxon>
        <taxon>Gammaproteobacteria</taxon>
        <taxon>Alteromonadales</taxon>
        <taxon>Shewanellaceae</taxon>
        <taxon>Shewanella</taxon>
    </lineage>
</organism>
<keyword id="KW-0687">Ribonucleoprotein</keyword>
<keyword id="KW-0689">Ribosomal protein</keyword>
<keyword id="KW-0694">RNA-binding</keyword>
<keyword id="KW-0699">rRNA-binding</keyword>
<gene>
    <name evidence="1" type="primary">rpsH</name>
    <name type="ordered locus">Shewmr7_0208</name>
</gene>
<evidence type="ECO:0000255" key="1">
    <source>
        <dbReference type="HAMAP-Rule" id="MF_01302"/>
    </source>
</evidence>
<evidence type="ECO:0000305" key="2"/>
<dbReference type="EMBL" id="CP000444">
    <property type="protein sequence ID" value="ABI41214.1"/>
    <property type="molecule type" value="Genomic_DNA"/>
</dbReference>
<dbReference type="SMR" id="Q0I091"/>
<dbReference type="KEGG" id="shm:Shewmr7_0208"/>
<dbReference type="HOGENOM" id="CLU_098428_0_0_6"/>
<dbReference type="GO" id="GO:1990904">
    <property type="term" value="C:ribonucleoprotein complex"/>
    <property type="evidence" value="ECO:0007669"/>
    <property type="project" value="UniProtKB-KW"/>
</dbReference>
<dbReference type="GO" id="GO:0005840">
    <property type="term" value="C:ribosome"/>
    <property type="evidence" value="ECO:0007669"/>
    <property type="project" value="UniProtKB-KW"/>
</dbReference>
<dbReference type="GO" id="GO:0019843">
    <property type="term" value="F:rRNA binding"/>
    <property type="evidence" value="ECO:0007669"/>
    <property type="project" value="UniProtKB-UniRule"/>
</dbReference>
<dbReference type="GO" id="GO:0003735">
    <property type="term" value="F:structural constituent of ribosome"/>
    <property type="evidence" value="ECO:0007669"/>
    <property type="project" value="InterPro"/>
</dbReference>
<dbReference type="GO" id="GO:0006412">
    <property type="term" value="P:translation"/>
    <property type="evidence" value="ECO:0007669"/>
    <property type="project" value="UniProtKB-UniRule"/>
</dbReference>
<dbReference type="FunFam" id="3.30.1370.30:FF:000003">
    <property type="entry name" value="30S ribosomal protein S8"/>
    <property type="match status" value="1"/>
</dbReference>
<dbReference type="FunFam" id="3.30.1490.10:FF:000001">
    <property type="entry name" value="30S ribosomal protein S8"/>
    <property type="match status" value="1"/>
</dbReference>
<dbReference type="Gene3D" id="3.30.1370.30">
    <property type="match status" value="1"/>
</dbReference>
<dbReference type="Gene3D" id="3.30.1490.10">
    <property type="match status" value="1"/>
</dbReference>
<dbReference type="HAMAP" id="MF_01302_B">
    <property type="entry name" value="Ribosomal_uS8_B"/>
    <property type="match status" value="1"/>
</dbReference>
<dbReference type="InterPro" id="IPR000630">
    <property type="entry name" value="Ribosomal_uS8"/>
</dbReference>
<dbReference type="InterPro" id="IPR047863">
    <property type="entry name" value="Ribosomal_uS8_CS"/>
</dbReference>
<dbReference type="InterPro" id="IPR035987">
    <property type="entry name" value="Ribosomal_uS8_sf"/>
</dbReference>
<dbReference type="NCBIfam" id="NF001109">
    <property type="entry name" value="PRK00136.1"/>
    <property type="match status" value="1"/>
</dbReference>
<dbReference type="PANTHER" id="PTHR11758">
    <property type="entry name" value="40S RIBOSOMAL PROTEIN S15A"/>
    <property type="match status" value="1"/>
</dbReference>
<dbReference type="Pfam" id="PF00410">
    <property type="entry name" value="Ribosomal_S8"/>
    <property type="match status" value="1"/>
</dbReference>
<dbReference type="SUPFAM" id="SSF56047">
    <property type="entry name" value="Ribosomal protein S8"/>
    <property type="match status" value="1"/>
</dbReference>
<dbReference type="PROSITE" id="PS00053">
    <property type="entry name" value="RIBOSOMAL_S8"/>
    <property type="match status" value="1"/>
</dbReference>
<accession>Q0I091</accession>
<reference key="1">
    <citation type="submission" date="2006-08" db="EMBL/GenBank/DDBJ databases">
        <title>Complete sequence of chromosome 1 of Shewanella sp. MR-7.</title>
        <authorList>
            <person name="Copeland A."/>
            <person name="Lucas S."/>
            <person name="Lapidus A."/>
            <person name="Barry K."/>
            <person name="Detter J.C."/>
            <person name="Glavina del Rio T."/>
            <person name="Hammon N."/>
            <person name="Israni S."/>
            <person name="Dalin E."/>
            <person name="Tice H."/>
            <person name="Pitluck S."/>
            <person name="Kiss H."/>
            <person name="Brettin T."/>
            <person name="Bruce D."/>
            <person name="Han C."/>
            <person name="Tapia R."/>
            <person name="Gilna P."/>
            <person name="Schmutz J."/>
            <person name="Larimer F."/>
            <person name="Land M."/>
            <person name="Hauser L."/>
            <person name="Kyrpides N."/>
            <person name="Mikhailova N."/>
            <person name="Nealson K."/>
            <person name="Konstantinidis K."/>
            <person name="Klappenbach J."/>
            <person name="Tiedje J."/>
            <person name="Richardson P."/>
        </authorList>
    </citation>
    <scope>NUCLEOTIDE SEQUENCE [LARGE SCALE GENOMIC DNA]</scope>
    <source>
        <strain>MR-7</strain>
    </source>
</reference>
<proteinExistence type="inferred from homology"/>
<feature type="chain" id="PRO_0000290931" description="Small ribosomal subunit protein uS8">
    <location>
        <begin position="1"/>
        <end position="130"/>
    </location>
</feature>